<reference key="1">
    <citation type="submission" date="2006-08" db="EMBL/GenBank/DDBJ databases">
        <title>Positive selection in transcription factor genes on the human lineage.</title>
        <authorList>
            <person name="Nickel G.C."/>
            <person name="Tefft D.L."/>
            <person name="Trevarthen K."/>
            <person name="Funt J."/>
            <person name="Adams M.D."/>
        </authorList>
    </citation>
    <scope>NUCLEOTIDE SEQUENCE [GENOMIC DNA]</scope>
</reference>
<accession>A2D649</accession>
<sequence length="304" mass="32387">MDYNRMNSFLEYPLCNRGPSAYSAHSAHSAPTSFPPSSTQAVDSYASEGRYGGGLSSPAFQQNSGYPAQQPPSALGVPFPSSAPSGYAPAACSPSYGPSQYYPLGQSEGDGGYFHPTSYGAQLGGLSDGYGAGGAGPGPYPPQHPPYGNEQTASFAPAYADLLSEDKEAPCPSEPNTPTARTFDWMKVKRNPPKTGKVSEPGLGSPSGLRTNFTTRQLTELEKEFHFNKYLSRARRVEIAATLELNETQVKIWFQNRRMKQKKREREGGRVPPAPPGCPKEAAGDASDQSTCTSPEASPSSVTS</sequence>
<protein>
    <recommendedName>
        <fullName>Homeobox protein Hox-B1</fullName>
    </recommendedName>
</protein>
<dbReference type="EMBL" id="DQ976864">
    <property type="protein sequence ID" value="ABM55142.1"/>
    <property type="molecule type" value="Genomic_DNA"/>
</dbReference>
<dbReference type="RefSeq" id="NP_001074229.1">
    <property type="nucleotide sequence ID" value="NM_001080760.1"/>
</dbReference>
<dbReference type="SMR" id="A2D649"/>
<dbReference type="FunCoup" id="A2D649">
    <property type="interactions" value="678"/>
</dbReference>
<dbReference type="STRING" id="9544.ENSMMUP00000029241"/>
<dbReference type="PaxDb" id="9544-ENSMMUP00000029241"/>
<dbReference type="Ensembl" id="ENSMMUT00000031244.4">
    <property type="protein sequence ID" value="ENSMMUP00000029241.2"/>
    <property type="gene ID" value="ENSMMUG00000022212.4"/>
</dbReference>
<dbReference type="GeneID" id="696111"/>
<dbReference type="KEGG" id="mcc:696111"/>
<dbReference type="CTD" id="3211"/>
<dbReference type="VEuPathDB" id="HostDB:ENSMMUG00000022212"/>
<dbReference type="VGNC" id="VGNC:73504">
    <property type="gene designation" value="HOXB1"/>
</dbReference>
<dbReference type="eggNOG" id="KOG0489">
    <property type="taxonomic scope" value="Eukaryota"/>
</dbReference>
<dbReference type="GeneTree" id="ENSGT00940000159503"/>
<dbReference type="HOGENOM" id="CLU_058839_1_0_1"/>
<dbReference type="InParanoid" id="A2D649"/>
<dbReference type="OMA" id="ACNPSYG"/>
<dbReference type="OrthoDB" id="6159439at2759"/>
<dbReference type="TreeFam" id="TF317730"/>
<dbReference type="Proteomes" id="UP000006718">
    <property type="component" value="Chromosome 16"/>
</dbReference>
<dbReference type="Bgee" id="ENSMMUG00000022212">
    <property type="expression patterns" value="Expressed in adipose tissue and 2 other cell types or tissues"/>
</dbReference>
<dbReference type="GO" id="GO:0005654">
    <property type="term" value="C:nucleoplasm"/>
    <property type="evidence" value="ECO:0007669"/>
    <property type="project" value="Ensembl"/>
</dbReference>
<dbReference type="GO" id="GO:0005634">
    <property type="term" value="C:nucleus"/>
    <property type="evidence" value="ECO:0000318"/>
    <property type="project" value="GO_Central"/>
</dbReference>
<dbReference type="GO" id="GO:0001228">
    <property type="term" value="F:DNA-binding transcription activator activity, RNA polymerase II-specific"/>
    <property type="evidence" value="ECO:0007669"/>
    <property type="project" value="Ensembl"/>
</dbReference>
<dbReference type="GO" id="GO:0000981">
    <property type="term" value="F:DNA-binding transcription factor activity, RNA polymerase II-specific"/>
    <property type="evidence" value="ECO:0000318"/>
    <property type="project" value="GO_Central"/>
</dbReference>
<dbReference type="GO" id="GO:0019904">
    <property type="term" value="F:protein domain specific binding"/>
    <property type="evidence" value="ECO:0007669"/>
    <property type="project" value="Ensembl"/>
</dbReference>
<dbReference type="GO" id="GO:0000978">
    <property type="term" value="F:RNA polymerase II cis-regulatory region sequence-specific DNA binding"/>
    <property type="evidence" value="ECO:0000318"/>
    <property type="project" value="GO_Central"/>
</dbReference>
<dbReference type="GO" id="GO:0048646">
    <property type="term" value="P:anatomical structure formation involved in morphogenesis"/>
    <property type="evidence" value="ECO:0007669"/>
    <property type="project" value="Ensembl"/>
</dbReference>
<dbReference type="GO" id="GO:0009952">
    <property type="term" value="P:anterior/posterior pattern specification"/>
    <property type="evidence" value="ECO:0007669"/>
    <property type="project" value="Ensembl"/>
</dbReference>
<dbReference type="GO" id="GO:0048704">
    <property type="term" value="P:embryonic skeletal system morphogenesis"/>
    <property type="evidence" value="ECO:0007669"/>
    <property type="project" value="Ensembl"/>
</dbReference>
<dbReference type="GO" id="GO:0021612">
    <property type="term" value="P:facial nerve structural organization"/>
    <property type="evidence" value="ECO:0007669"/>
    <property type="project" value="Ensembl"/>
</dbReference>
<dbReference type="GO" id="GO:0021754">
    <property type="term" value="P:facial nucleus development"/>
    <property type="evidence" value="ECO:0007669"/>
    <property type="project" value="Ensembl"/>
</dbReference>
<dbReference type="GO" id="GO:0006357">
    <property type="term" value="P:regulation of transcription by RNA polymerase II"/>
    <property type="evidence" value="ECO:0000318"/>
    <property type="project" value="GO_Central"/>
</dbReference>
<dbReference type="GO" id="GO:0021570">
    <property type="term" value="P:rhombomere 4 development"/>
    <property type="evidence" value="ECO:0007669"/>
    <property type="project" value="Ensembl"/>
</dbReference>
<dbReference type="GO" id="GO:0021571">
    <property type="term" value="P:rhombomere 5 development"/>
    <property type="evidence" value="ECO:0007669"/>
    <property type="project" value="Ensembl"/>
</dbReference>
<dbReference type="CDD" id="cd00086">
    <property type="entry name" value="homeodomain"/>
    <property type="match status" value="1"/>
</dbReference>
<dbReference type="FunFam" id="1.10.10.60:FF:000113">
    <property type="entry name" value="homeobox protein Hox-B1"/>
    <property type="match status" value="1"/>
</dbReference>
<dbReference type="Gene3D" id="1.10.10.60">
    <property type="entry name" value="Homeodomain-like"/>
    <property type="match status" value="1"/>
</dbReference>
<dbReference type="InterPro" id="IPR001356">
    <property type="entry name" value="HD"/>
</dbReference>
<dbReference type="InterPro" id="IPR020479">
    <property type="entry name" value="HD_metazoa"/>
</dbReference>
<dbReference type="InterPro" id="IPR017970">
    <property type="entry name" value="Homeobox_CS"/>
</dbReference>
<dbReference type="InterPro" id="IPR009057">
    <property type="entry name" value="Homeodomain-like_sf"/>
</dbReference>
<dbReference type="InterPro" id="IPR046327">
    <property type="entry name" value="HXA1/B1/D1"/>
</dbReference>
<dbReference type="PANTHER" id="PTHR45946:SF5">
    <property type="entry name" value="HOMEOBOX PROTEIN HOX-B1"/>
    <property type="match status" value="1"/>
</dbReference>
<dbReference type="PANTHER" id="PTHR45946">
    <property type="entry name" value="HOMEOBOX PROTEIN ROUGH-RELATED"/>
    <property type="match status" value="1"/>
</dbReference>
<dbReference type="Pfam" id="PF00046">
    <property type="entry name" value="Homeodomain"/>
    <property type="match status" value="1"/>
</dbReference>
<dbReference type="PRINTS" id="PR00024">
    <property type="entry name" value="HOMEOBOX"/>
</dbReference>
<dbReference type="SMART" id="SM00389">
    <property type="entry name" value="HOX"/>
    <property type="match status" value="1"/>
</dbReference>
<dbReference type="SUPFAM" id="SSF46689">
    <property type="entry name" value="Homeodomain-like"/>
    <property type="match status" value="1"/>
</dbReference>
<dbReference type="PROSITE" id="PS00027">
    <property type="entry name" value="HOMEOBOX_1"/>
    <property type="match status" value="1"/>
</dbReference>
<dbReference type="PROSITE" id="PS50071">
    <property type="entry name" value="HOMEOBOX_2"/>
    <property type="match status" value="1"/>
</dbReference>
<organism>
    <name type="scientific">Macaca mulatta</name>
    <name type="common">Rhesus macaque</name>
    <dbReference type="NCBI Taxonomy" id="9544"/>
    <lineage>
        <taxon>Eukaryota</taxon>
        <taxon>Metazoa</taxon>
        <taxon>Chordata</taxon>
        <taxon>Craniata</taxon>
        <taxon>Vertebrata</taxon>
        <taxon>Euteleostomi</taxon>
        <taxon>Mammalia</taxon>
        <taxon>Eutheria</taxon>
        <taxon>Euarchontoglires</taxon>
        <taxon>Primates</taxon>
        <taxon>Haplorrhini</taxon>
        <taxon>Catarrhini</taxon>
        <taxon>Cercopithecidae</taxon>
        <taxon>Cercopithecinae</taxon>
        <taxon>Macaca</taxon>
    </lineage>
</organism>
<keyword id="KW-0217">Developmental protein</keyword>
<keyword id="KW-0238">DNA-binding</keyword>
<keyword id="KW-0371">Homeobox</keyword>
<keyword id="KW-0539">Nucleus</keyword>
<keyword id="KW-1185">Reference proteome</keyword>
<keyword id="KW-0804">Transcription</keyword>
<keyword id="KW-0805">Transcription regulation</keyword>
<comment type="function">
    <text evidence="1">Sequence-specific transcription factor which is part of a developmental regulatory system that provides cells with specific positional identities on the anterior-posterior axis. Acts on the anterior body structures (By similarity).</text>
</comment>
<comment type="subcellular location">
    <subcellularLocation>
        <location evidence="2">Nucleus</location>
    </subcellularLocation>
</comment>
<comment type="similarity">
    <text evidence="4">Belongs to the Antp homeobox family. Labial subfamily.</text>
</comment>
<gene>
    <name type="primary">HOXB1</name>
</gene>
<proteinExistence type="inferred from homology"/>
<name>HXB1_MACMU</name>
<evidence type="ECO:0000250" key="1"/>
<evidence type="ECO:0000255" key="2">
    <source>
        <dbReference type="PROSITE-ProRule" id="PRU00108"/>
    </source>
</evidence>
<evidence type="ECO:0000256" key="3">
    <source>
        <dbReference type="SAM" id="MobiDB-lite"/>
    </source>
</evidence>
<evidence type="ECO:0000305" key="4"/>
<feature type="chain" id="PRO_0000285423" description="Homeobox protein Hox-B1">
    <location>
        <begin position="1"/>
        <end position="304"/>
    </location>
</feature>
<feature type="DNA-binding region" description="Homeobox" evidence="2">
    <location>
        <begin position="206"/>
        <end position="265"/>
    </location>
</feature>
<feature type="region of interest" description="Disordered" evidence="3">
    <location>
        <begin position="25"/>
        <end position="80"/>
    </location>
</feature>
<feature type="region of interest" description="Disordered" evidence="3">
    <location>
        <begin position="130"/>
        <end position="151"/>
    </location>
</feature>
<feature type="region of interest" description="Disordered" evidence="3">
    <location>
        <begin position="187"/>
        <end position="211"/>
    </location>
</feature>
<feature type="region of interest" description="Disordered" evidence="3">
    <location>
        <begin position="257"/>
        <end position="304"/>
    </location>
</feature>
<feature type="short sequence motif" description="Antp-type hexapeptide">
    <location>
        <begin position="182"/>
        <end position="187"/>
    </location>
</feature>
<feature type="compositionally biased region" description="Low complexity" evidence="3">
    <location>
        <begin position="25"/>
        <end position="39"/>
    </location>
</feature>
<feature type="compositionally biased region" description="Polar residues" evidence="3">
    <location>
        <begin position="58"/>
        <end position="67"/>
    </location>
</feature>
<feature type="compositionally biased region" description="Polar residues" evidence="3">
    <location>
        <begin position="287"/>
        <end position="304"/>
    </location>
</feature>